<dbReference type="EMBL" id="X05817">
    <property type="status" value="NOT_ANNOTATED_CDS"/>
    <property type="molecule type" value="Genomic_DNA"/>
</dbReference>
<dbReference type="PIR" id="F27129">
    <property type="entry name" value="W2WLB4"/>
</dbReference>
<dbReference type="SMR" id="P08345"/>
<dbReference type="Proteomes" id="UP000007613">
    <property type="component" value="Segment"/>
</dbReference>
<dbReference type="GO" id="GO:0042025">
    <property type="term" value="C:host cell nucleus"/>
    <property type="evidence" value="ECO:0007669"/>
    <property type="project" value="UniProtKB-SubCell"/>
</dbReference>
<dbReference type="GO" id="GO:0003677">
    <property type="term" value="F:DNA binding"/>
    <property type="evidence" value="ECO:0007669"/>
    <property type="project" value="UniProtKB-UniRule"/>
</dbReference>
<dbReference type="GO" id="GO:0003700">
    <property type="term" value="F:DNA-binding transcription factor activity"/>
    <property type="evidence" value="ECO:0007669"/>
    <property type="project" value="UniProtKB-UniRule"/>
</dbReference>
<dbReference type="GO" id="GO:0000166">
    <property type="term" value="F:nucleotide binding"/>
    <property type="evidence" value="ECO:0007669"/>
    <property type="project" value="UniProtKB-UniRule"/>
</dbReference>
<dbReference type="GO" id="GO:0006260">
    <property type="term" value="P:DNA replication"/>
    <property type="evidence" value="ECO:0007669"/>
    <property type="project" value="UniProtKB-KW"/>
</dbReference>
<dbReference type="GO" id="GO:0006351">
    <property type="term" value="P:DNA-templated transcription"/>
    <property type="evidence" value="ECO:0007669"/>
    <property type="project" value="UniProtKB-UniRule"/>
</dbReference>
<dbReference type="GO" id="GO:0006275">
    <property type="term" value="P:regulation of DNA replication"/>
    <property type="evidence" value="ECO:0007669"/>
    <property type="project" value="UniProtKB-UniRule"/>
</dbReference>
<dbReference type="GO" id="GO:0039693">
    <property type="term" value="P:viral DNA genome replication"/>
    <property type="evidence" value="ECO:0007669"/>
    <property type="project" value="UniProtKB-UniRule"/>
</dbReference>
<dbReference type="Gene3D" id="3.30.70.330">
    <property type="match status" value="1"/>
</dbReference>
<dbReference type="Gene3D" id="2.170.200.10">
    <property type="entry name" value="Papillomavirus E2 early protein domain"/>
    <property type="match status" value="1"/>
</dbReference>
<dbReference type="HAMAP" id="MF_04001">
    <property type="entry name" value="PPV_E2"/>
    <property type="match status" value="1"/>
</dbReference>
<dbReference type="InterPro" id="IPR035975">
    <property type="entry name" value="E2/EBNA1_C_sf"/>
</dbReference>
<dbReference type="InterPro" id="IPR012677">
    <property type="entry name" value="Nucleotide-bd_a/b_plait_sf"/>
</dbReference>
<dbReference type="InterPro" id="IPR000427">
    <property type="entry name" value="Papillomavirus_E2_C"/>
</dbReference>
<dbReference type="InterPro" id="IPR001866">
    <property type="entry name" value="PPV_E2_N"/>
</dbReference>
<dbReference type="InterPro" id="IPR033668">
    <property type="entry name" value="Reg_prot_E2"/>
</dbReference>
<dbReference type="InterPro" id="IPR036050">
    <property type="entry name" value="Regulatory_protein_E2_N"/>
</dbReference>
<dbReference type="InterPro" id="IPR042504">
    <property type="entry name" value="Regulatory_protein_E2_N_2"/>
</dbReference>
<dbReference type="Pfam" id="PF00511">
    <property type="entry name" value="PPV_E2_C"/>
    <property type="match status" value="1"/>
</dbReference>
<dbReference type="Pfam" id="PF00508">
    <property type="entry name" value="PPV_E2_N"/>
    <property type="match status" value="1"/>
</dbReference>
<dbReference type="SUPFAM" id="SSF51332">
    <property type="entry name" value="E2 regulatory, transactivation domain"/>
    <property type="match status" value="1"/>
</dbReference>
<dbReference type="SUPFAM" id="SSF54957">
    <property type="entry name" value="Viral DNA-binding domain"/>
    <property type="match status" value="1"/>
</dbReference>
<organismHost>
    <name type="scientific">Bos taurus</name>
    <name type="common">Bovine</name>
    <dbReference type="NCBI Taxonomy" id="9913"/>
</organismHost>
<comment type="function">
    <text evidence="1">Plays a role in the initiation of viral DNA replication. A dimer of E2 interacts with a dimer of E1 in order to improve specificity of E1 DNA binding activity. Once the complex recognizes and binds DNA at specific sites, the E2 dimer is removed from DNA. E2 also regulates viral transcription through binding to the E2RE response element (5'-ACCNNNNNNGGT-3') present in multiple copies in the regulatory regions of the viral genome. Activates or represses transcription depending on E2RE's position with regards to proximal promoter elements including the TATA-box. Repression occurs by sterically hindering the assembly of the transcription initiation complex.</text>
</comment>
<comment type="subunit">
    <text evidence="1">Binds DNA as homodimer. Interacts with protein E1; this interaction greatly increases E1 DNA-binding activity. Interacts with protein L1; this interaction enhances E2-dependent replication and transcription activation. Interacts with protein L2; this interaction inhibits E2 transcriptional activity but not DNA replication function E2. Interacts with protein E7; this interaction inhibits E7 oncogenic activity. Interacts with host TAF1; this interaction modulates E2-dependent transcriptional regulation. Interacts with host BRD4; this interaction mediates E2 transcriptional activation function. Additionally, the interaction with host BRD4 on mitotic chromosomes mediates tethering of the viral genome. Interacts with host TOPBP1; this interaction is required for optimal viral DNA replication.</text>
</comment>
<comment type="subcellular location">
    <subcellularLocation>
        <location evidence="1">Host nucleus</location>
    </subcellularLocation>
</comment>
<comment type="PTM">
    <text evidence="1">Phosphorylated.</text>
</comment>
<comment type="similarity">
    <text evidence="1">Belongs to the papillomaviridae E2 protein family.</text>
</comment>
<accession>P08345</accession>
<reference key="1">
    <citation type="journal article" date="1987" name="J. Gen. Virol.">
        <title>The nucleotide sequence and genome organization of bovine papillomavirus type 4.</title>
        <authorList>
            <person name="Patel K.R."/>
            <person name="Smith K.T."/>
            <person name="Campo M.S."/>
        </authorList>
    </citation>
    <scope>NUCLEOTIDE SEQUENCE [GENOMIC DNA]</scope>
</reference>
<proteinExistence type="inferred from homology"/>
<name>VE2_BPV4</name>
<gene>
    <name evidence="1" type="primary">E2</name>
</gene>
<protein>
    <recommendedName>
        <fullName evidence="1">Regulatory protein E2</fullName>
    </recommendedName>
</protein>
<evidence type="ECO:0000255" key="1">
    <source>
        <dbReference type="HAMAP-Rule" id="MF_04001"/>
    </source>
</evidence>
<evidence type="ECO:0000256" key="2">
    <source>
        <dbReference type="SAM" id="MobiDB-lite"/>
    </source>
</evidence>
<keyword id="KW-0010">Activator</keyword>
<keyword id="KW-0235">DNA replication</keyword>
<keyword id="KW-0238">DNA-binding</keyword>
<keyword id="KW-0244">Early protein</keyword>
<keyword id="KW-1048">Host nucleus</keyword>
<keyword id="KW-0597">Phosphoprotein</keyword>
<keyword id="KW-0678">Repressor</keyword>
<keyword id="KW-0804">Transcription</keyword>
<keyword id="KW-0805">Transcription regulation</keyword>
<feature type="chain" id="PRO_0000133175" description="Regulatory protein E2">
    <location>
        <begin position="1"/>
        <end position="334"/>
    </location>
</feature>
<feature type="region of interest" description="Transactivation domain" evidence="1">
    <location>
        <begin position="1"/>
        <end position="127"/>
    </location>
</feature>
<feature type="region of interest" description="Disordered" evidence="2">
    <location>
        <begin position="127"/>
        <end position="240"/>
    </location>
</feature>
<feature type="region of interest" description="DNA-binding domain" evidence="1">
    <location>
        <begin position="251"/>
        <end position="334"/>
    </location>
</feature>
<feature type="compositionally biased region" description="Polar residues" evidence="2">
    <location>
        <begin position="229"/>
        <end position="240"/>
    </location>
</feature>
<sequence>MYLCLESLQKSEFANQRWSLVDTSIETFKAPPENTLKKRGQHVTVIYDQNAMNSMVYTLWKEVYYVDETETWHKTSSDLDYDGIFYIDNQGNKIYYVNFQDDAALYSNSGMGQVHFESKVLSPSVTSSLRVGSTGGQRGTQTGDHARGRSRPSPRSSRDARGRQQRAQSSSRSRSRSRSRSPTKGPHSSGRDTRLPSPGRPPGGRRRGTPERERCPGTPTPPTPDQVGGRSSTPKRQASSRLAQLIDAAYDPPVLLLQGAANTLKCFRRRATQAHPHKFLCMSTSWTWVSKTSPLKSGHRMLIAFSNSEQRNCFLASVRLPKGVSAVKGALDGL</sequence>
<organism>
    <name type="scientific">Bos taurus papillomavirus 4</name>
    <name type="common">Bovine papillomavirus 4</name>
    <dbReference type="NCBI Taxonomy" id="10562"/>
    <lineage>
        <taxon>Viruses</taxon>
        <taxon>Monodnaviria</taxon>
        <taxon>Shotokuvirae</taxon>
        <taxon>Cossaviricota</taxon>
        <taxon>Papovaviricetes</taxon>
        <taxon>Zurhausenvirales</taxon>
        <taxon>Papillomaviridae</taxon>
        <taxon>Firstpapillomavirinae</taxon>
        <taxon>Xipapillomavirus</taxon>
        <taxon>Xipapillomavirus 1</taxon>
    </lineage>
</organism>